<dbReference type="EC" id="2.7.-.-" evidence="1"/>
<dbReference type="EMBL" id="CP000436">
    <property type="protein sequence ID" value="ABI24821.1"/>
    <property type="molecule type" value="Genomic_DNA"/>
</dbReference>
<dbReference type="SMR" id="Q0I208"/>
<dbReference type="KEGG" id="hso:HS_0544"/>
<dbReference type="eggNOG" id="COG0661">
    <property type="taxonomic scope" value="Bacteria"/>
</dbReference>
<dbReference type="HOGENOM" id="CLU_006533_0_0_6"/>
<dbReference type="UniPathway" id="UPA00232"/>
<dbReference type="GO" id="GO:0005886">
    <property type="term" value="C:plasma membrane"/>
    <property type="evidence" value="ECO:0007669"/>
    <property type="project" value="UniProtKB-SubCell"/>
</dbReference>
<dbReference type="GO" id="GO:0005524">
    <property type="term" value="F:ATP binding"/>
    <property type="evidence" value="ECO:0007669"/>
    <property type="project" value="UniProtKB-KW"/>
</dbReference>
<dbReference type="GO" id="GO:0004672">
    <property type="term" value="F:protein kinase activity"/>
    <property type="evidence" value="ECO:0007669"/>
    <property type="project" value="UniProtKB-UniRule"/>
</dbReference>
<dbReference type="GO" id="GO:0010795">
    <property type="term" value="P:regulation of ubiquinone biosynthetic process"/>
    <property type="evidence" value="ECO:0007669"/>
    <property type="project" value="UniProtKB-UniRule"/>
</dbReference>
<dbReference type="GO" id="GO:0006744">
    <property type="term" value="P:ubiquinone biosynthetic process"/>
    <property type="evidence" value="ECO:0007669"/>
    <property type="project" value="UniProtKB-UniPathway"/>
</dbReference>
<dbReference type="CDD" id="cd13972">
    <property type="entry name" value="UbiB"/>
    <property type="match status" value="1"/>
</dbReference>
<dbReference type="HAMAP" id="MF_00414">
    <property type="entry name" value="UbiB"/>
    <property type="match status" value="1"/>
</dbReference>
<dbReference type="InterPro" id="IPR004147">
    <property type="entry name" value="ABC1_dom"/>
</dbReference>
<dbReference type="InterPro" id="IPR011009">
    <property type="entry name" value="Kinase-like_dom_sf"/>
</dbReference>
<dbReference type="InterPro" id="IPR010232">
    <property type="entry name" value="UbiB"/>
</dbReference>
<dbReference type="InterPro" id="IPR045308">
    <property type="entry name" value="UbiB_bact"/>
</dbReference>
<dbReference type="InterPro" id="IPR050154">
    <property type="entry name" value="UbiB_kinase"/>
</dbReference>
<dbReference type="NCBIfam" id="NF003404">
    <property type="entry name" value="PRK04750.1"/>
    <property type="match status" value="1"/>
</dbReference>
<dbReference type="NCBIfam" id="TIGR01982">
    <property type="entry name" value="UbiB"/>
    <property type="match status" value="1"/>
</dbReference>
<dbReference type="PANTHER" id="PTHR10566">
    <property type="entry name" value="CHAPERONE-ACTIVITY OF BC1 COMPLEX CABC1 -RELATED"/>
    <property type="match status" value="1"/>
</dbReference>
<dbReference type="PANTHER" id="PTHR10566:SF113">
    <property type="entry name" value="PROTEIN ACTIVITY OF BC1 COMPLEX KINASE 7, CHLOROPLASTIC"/>
    <property type="match status" value="1"/>
</dbReference>
<dbReference type="Pfam" id="PF03109">
    <property type="entry name" value="ABC1"/>
    <property type="match status" value="1"/>
</dbReference>
<dbReference type="SUPFAM" id="SSF56112">
    <property type="entry name" value="Protein kinase-like (PK-like)"/>
    <property type="match status" value="1"/>
</dbReference>
<reference key="1">
    <citation type="journal article" date="2007" name="J. Bacteriol.">
        <title>Complete genome sequence of Haemophilus somnus (Histophilus somni) strain 129Pt and comparison to Haemophilus ducreyi 35000HP and Haemophilus influenzae Rd.</title>
        <authorList>
            <person name="Challacombe J.F."/>
            <person name="Duncan A.J."/>
            <person name="Brettin T.S."/>
            <person name="Bruce D."/>
            <person name="Chertkov O."/>
            <person name="Detter J.C."/>
            <person name="Han C.S."/>
            <person name="Misra M."/>
            <person name="Richardson P."/>
            <person name="Tapia R."/>
            <person name="Thayer N."/>
            <person name="Xie G."/>
            <person name="Inzana T.J."/>
        </authorList>
    </citation>
    <scope>NUCLEOTIDE SEQUENCE [LARGE SCALE GENOMIC DNA]</scope>
    <source>
        <strain>129Pt</strain>
    </source>
</reference>
<keyword id="KW-0067">ATP-binding</keyword>
<keyword id="KW-0997">Cell inner membrane</keyword>
<keyword id="KW-1003">Cell membrane</keyword>
<keyword id="KW-0418">Kinase</keyword>
<keyword id="KW-0472">Membrane</keyword>
<keyword id="KW-0547">Nucleotide-binding</keyword>
<keyword id="KW-0808">Transferase</keyword>
<keyword id="KW-0812">Transmembrane</keyword>
<keyword id="KW-1133">Transmembrane helix</keyword>
<keyword id="KW-0831">Ubiquinone biosynthesis</keyword>
<name>UBIB_HISS1</name>
<organism>
    <name type="scientific">Histophilus somni (strain 129Pt)</name>
    <name type="common">Haemophilus somnus</name>
    <dbReference type="NCBI Taxonomy" id="205914"/>
    <lineage>
        <taxon>Bacteria</taxon>
        <taxon>Pseudomonadati</taxon>
        <taxon>Pseudomonadota</taxon>
        <taxon>Gammaproteobacteria</taxon>
        <taxon>Pasteurellales</taxon>
        <taxon>Pasteurellaceae</taxon>
        <taxon>Histophilus</taxon>
    </lineage>
</organism>
<accession>Q0I208</accession>
<sequence length="544" mass="63349">MKLNDIKRLYKIVRVFLSYGIDEILPHNKYTRSIRCWRMLFFWLKNKHKNKAFGLCLRLALQELGPVWIKLGQMLSTRRDLFPAEIADELALLQDNVEAFSGKIARQQIEQALGSSLENWFTDFDENALASASIAQVHTAKLKLGEEQEKEVVIKVLRPNIQPQIEADLSWMYKLAGLLPKLFREGYRLRAVEVIQEYEKTLRDELDLRVEMANAIKLRENFLDSPMLYIPKMYEAFCHKNVIVMERIYGIPVSDVETLQRNGTDMKLLAERGVQVFFTQVFRDSFFHADMHPGNIFVNPHYPENPQYIGIDCGIVGKLNESDKRYLAESFVAFFNRDYRRVAQMHVDAGWTPQDTNIDDFEQAFREVCEPIFAKPLSEISFAQVLLNLFNVAREFNMQVQPQLVLLQKTLLYIEGLGRQLYPQLDLWDTAKPFLQNWLNEQIGMKVTFKKLKAKLPYLQEHLPDFPETLMDALKQQKFISQQLVEINKKLAKQQRWQKKMFVLIVGIVIFSVTLWQFAALPLAISAGLFLVGFLVWLIGFLLP</sequence>
<comment type="function">
    <text evidence="1">Is probably a protein kinase regulator of UbiI activity which is involved in aerobic coenzyme Q (ubiquinone) biosynthesis.</text>
</comment>
<comment type="pathway">
    <text>Cofactor biosynthesis; ubiquinone biosynthesis [regulation].</text>
</comment>
<comment type="subcellular location">
    <subcellularLocation>
        <location evidence="1">Cell inner membrane</location>
        <topology evidence="1">Multi-pass membrane protein</topology>
    </subcellularLocation>
</comment>
<comment type="similarity">
    <text evidence="1">Belongs to the ABC1 family. UbiB subfamily.</text>
</comment>
<feature type="chain" id="PRO_1000050043" description="Probable protein kinase UbiB">
    <location>
        <begin position="1"/>
        <end position="544"/>
    </location>
</feature>
<feature type="transmembrane region" description="Helical" evidence="1">
    <location>
        <begin position="501"/>
        <end position="521"/>
    </location>
</feature>
<feature type="transmembrane region" description="Helical" evidence="1">
    <location>
        <begin position="523"/>
        <end position="543"/>
    </location>
</feature>
<feature type="domain" description="Protein kinase" evidence="1">
    <location>
        <begin position="123"/>
        <end position="504"/>
    </location>
</feature>
<feature type="active site" description="Proton acceptor" evidence="1">
    <location>
        <position position="290"/>
    </location>
</feature>
<feature type="binding site" evidence="1">
    <location>
        <begin position="129"/>
        <end position="137"/>
    </location>
    <ligand>
        <name>ATP</name>
        <dbReference type="ChEBI" id="CHEBI:30616"/>
    </ligand>
</feature>
<feature type="binding site" evidence="1">
    <location>
        <position position="155"/>
    </location>
    <ligand>
        <name>ATP</name>
        <dbReference type="ChEBI" id="CHEBI:30616"/>
    </ligand>
</feature>
<gene>
    <name evidence="1" type="primary">ubiB</name>
    <name type="ordered locus">HS_0544</name>
</gene>
<proteinExistence type="inferred from homology"/>
<evidence type="ECO:0000255" key="1">
    <source>
        <dbReference type="HAMAP-Rule" id="MF_00414"/>
    </source>
</evidence>
<protein>
    <recommendedName>
        <fullName evidence="1">Probable protein kinase UbiB</fullName>
        <ecNumber evidence="1">2.7.-.-</ecNumber>
    </recommendedName>
    <alternativeName>
        <fullName evidence="1">Ubiquinone biosynthesis protein UbiB</fullName>
    </alternativeName>
</protein>